<comment type="function">
    <text evidence="1">Catalyzes the reduction of nitrite to ammonia, consuming six electrons in the process.</text>
</comment>
<comment type="catalytic activity">
    <reaction evidence="1">
        <text>6 Fe(III)-[cytochrome c] + NH4(+) + 2 H2O = 6 Fe(II)-[cytochrome c] + nitrite + 8 H(+)</text>
        <dbReference type="Rhea" id="RHEA:13089"/>
        <dbReference type="Rhea" id="RHEA-COMP:10350"/>
        <dbReference type="Rhea" id="RHEA-COMP:14399"/>
        <dbReference type="ChEBI" id="CHEBI:15377"/>
        <dbReference type="ChEBI" id="CHEBI:15378"/>
        <dbReference type="ChEBI" id="CHEBI:16301"/>
        <dbReference type="ChEBI" id="CHEBI:28938"/>
        <dbReference type="ChEBI" id="CHEBI:29033"/>
        <dbReference type="ChEBI" id="CHEBI:29034"/>
        <dbReference type="EC" id="1.7.2.2"/>
    </reaction>
</comment>
<comment type="cofactor">
    <cofactor evidence="1">
        <name>Ca(2+)</name>
        <dbReference type="ChEBI" id="CHEBI:29108"/>
    </cofactor>
    <text evidence="1">Binds 1 Ca(2+) ion per monomer.</text>
</comment>
<comment type="cofactor">
    <cofactor evidence="1">
        <name>heme c</name>
        <dbReference type="ChEBI" id="CHEBI:61717"/>
    </cofactor>
    <text evidence="1">Binds 5 heme c groups covalently per monomer.</text>
</comment>
<comment type="pathway">
    <text evidence="1">Nitrogen metabolism; nitrate reduction (assimilation).</text>
</comment>
<comment type="subcellular location">
    <subcellularLocation>
        <location evidence="1">Periplasm</location>
    </subcellularLocation>
</comment>
<comment type="similarity">
    <text evidence="1">Belongs to the cytochrome c-552 family.</text>
</comment>
<name>NRFA_SALPK</name>
<sequence>MARKTLRARRFFSLIFPFFFITSVYAEQTPVSAKTVTVEAKNETFAPQHPDQYQSWKATSEQSAREDALAEDPRLVILWAGYPFSRDYNKPRGHAYAVTDVRETLRTGAPKTAEDGPLPMACWSCKSPDVALLIQQEGEDGYFHGKWARGGPEIVNDLGCADCHNTASDDFAQGKPALTLSRPYAERAMEAISKPFDKAGRFDQQSMVCGQCHVEYYFDGKNKAVKFPWDEGMKVENMEQYYDAIAFSDWTNSLSKTPMLKAQHPEYETWSAGIHGKNNVTCIDCHMPKVQNAEGKLYTDHKIGNPFDNFAQTCANCHTQDKASLQKVVAERKQAIHDLKIKVEDQLVHAHFEAKAAWDAGATDAEMKPILNDIRHAQWRWDLAIASHGIHMHAPEEGLRMLGSAMDKAADARTKLARLLATKGITHEIPLPDISTKEKAQKAIGLNMQQINAEKQDFLKTVVPQWEDQARKNSLLSQ</sequence>
<feature type="signal peptide" evidence="1">
    <location>
        <begin position="1"/>
        <end position="26"/>
    </location>
</feature>
<feature type="chain" id="PRO_1000138221" description="Cytochrome c-552">
    <location>
        <begin position="27"/>
        <end position="478"/>
    </location>
</feature>
<feature type="binding site" description="axial binding residue" evidence="1">
    <location>
        <position position="94"/>
    </location>
    <ligand>
        <name>heme c</name>
        <dbReference type="ChEBI" id="CHEBI:61717"/>
        <label>3</label>
    </ligand>
    <ligandPart>
        <name>Fe</name>
        <dbReference type="ChEBI" id="CHEBI:18248"/>
    </ligandPart>
</feature>
<feature type="binding site" description="covalent" evidence="1">
    <location>
        <position position="122"/>
    </location>
    <ligand>
        <name>heme</name>
        <dbReference type="ChEBI" id="CHEBI:30413"/>
        <label>1</label>
    </ligand>
</feature>
<feature type="binding site" description="covalent" evidence="1">
    <location>
        <position position="125"/>
    </location>
    <ligand>
        <name>heme</name>
        <dbReference type="ChEBI" id="CHEBI:30413"/>
        <label>1</label>
    </ligand>
</feature>
<feature type="binding site" description="axial binding residue" evidence="1">
    <location>
        <position position="126"/>
    </location>
    <ligand>
        <name>heme</name>
        <dbReference type="ChEBI" id="CHEBI:30413"/>
        <label>1</label>
    </ligand>
    <ligandPart>
        <name>Fe</name>
        <dbReference type="ChEBI" id="CHEBI:18248"/>
    </ligandPart>
</feature>
<feature type="binding site" description="covalent" evidence="1">
    <location>
        <position position="160"/>
    </location>
    <ligand>
        <name>heme c</name>
        <dbReference type="ChEBI" id="CHEBI:61717"/>
        <label>2</label>
    </ligand>
</feature>
<feature type="binding site" description="covalent" evidence="1">
    <location>
        <position position="163"/>
    </location>
    <ligand>
        <name>heme c</name>
        <dbReference type="ChEBI" id="CHEBI:61717"/>
        <label>2</label>
    </ligand>
</feature>
<feature type="binding site" description="axial binding residue" evidence="1">
    <location>
        <position position="164"/>
    </location>
    <ligand>
        <name>heme c</name>
        <dbReference type="ChEBI" id="CHEBI:61717"/>
        <label>2</label>
    </ligand>
    <ligandPart>
        <name>Fe</name>
        <dbReference type="ChEBI" id="CHEBI:18248"/>
    </ligandPart>
</feature>
<feature type="binding site" description="covalent" evidence="1">
    <location>
        <position position="209"/>
    </location>
    <ligand>
        <name>heme c</name>
        <dbReference type="ChEBI" id="CHEBI:61717"/>
        <label>3</label>
    </ligand>
</feature>
<feature type="binding site" description="covalent" evidence="1">
    <location>
        <position position="212"/>
    </location>
    <ligand>
        <name>heme c</name>
        <dbReference type="ChEBI" id="CHEBI:61717"/>
        <label>3</label>
    </ligand>
</feature>
<feature type="binding site" description="axial binding residue" evidence="1">
    <location>
        <position position="213"/>
    </location>
    <ligand>
        <name>heme c</name>
        <dbReference type="ChEBI" id="CHEBI:61717"/>
        <label>3</label>
    </ligand>
    <ligandPart>
        <name>Fe</name>
        <dbReference type="ChEBI" id="CHEBI:18248"/>
    </ligandPart>
</feature>
<feature type="binding site" evidence="1">
    <location>
        <position position="215"/>
    </location>
    <ligand>
        <name>Ca(2+)</name>
        <dbReference type="ChEBI" id="CHEBI:29108"/>
    </ligand>
</feature>
<feature type="binding site" evidence="1">
    <location>
        <position position="216"/>
    </location>
    <ligand>
        <name>Ca(2+)</name>
        <dbReference type="ChEBI" id="CHEBI:29108"/>
    </ligand>
</feature>
<feature type="binding site" evidence="1">
    <location>
        <position position="216"/>
    </location>
    <ligand>
        <name>substrate</name>
    </ligand>
</feature>
<feature type="binding site" evidence="1">
    <location>
        <position position="261"/>
    </location>
    <ligand>
        <name>Ca(2+)</name>
        <dbReference type="ChEBI" id="CHEBI:29108"/>
    </ligand>
</feature>
<feature type="binding site" evidence="1">
    <location>
        <position position="263"/>
    </location>
    <ligand>
        <name>Ca(2+)</name>
        <dbReference type="ChEBI" id="CHEBI:29108"/>
    </ligand>
</feature>
<feature type="binding site" evidence="1">
    <location>
        <position position="264"/>
    </location>
    <ligand>
        <name>substrate</name>
    </ligand>
</feature>
<feature type="binding site" description="axial binding residue" evidence="1">
    <location>
        <position position="275"/>
    </location>
    <ligand>
        <name>heme c</name>
        <dbReference type="ChEBI" id="CHEBI:61717"/>
        <label>5</label>
    </ligand>
    <ligandPart>
        <name>Fe</name>
        <dbReference type="ChEBI" id="CHEBI:18248"/>
    </ligandPart>
</feature>
<feature type="binding site" description="covalent" evidence="1">
    <location>
        <position position="282"/>
    </location>
    <ligand>
        <name>heme c</name>
        <dbReference type="ChEBI" id="CHEBI:61717"/>
        <label>4</label>
    </ligand>
</feature>
<feature type="binding site" description="covalent" evidence="1">
    <location>
        <position position="285"/>
    </location>
    <ligand>
        <name>heme c</name>
        <dbReference type="ChEBI" id="CHEBI:61717"/>
        <label>4</label>
    </ligand>
</feature>
<feature type="binding site" description="axial binding residue" evidence="1">
    <location>
        <position position="286"/>
    </location>
    <ligand>
        <name>heme c</name>
        <dbReference type="ChEBI" id="CHEBI:61717"/>
        <label>4</label>
    </ligand>
    <ligandPart>
        <name>Fe</name>
        <dbReference type="ChEBI" id="CHEBI:18248"/>
    </ligandPart>
</feature>
<feature type="binding site" description="axial binding residue" evidence="1">
    <location>
        <position position="301"/>
    </location>
    <ligand>
        <name>heme c</name>
        <dbReference type="ChEBI" id="CHEBI:61717"/>
        <label>2</label>
    </ligand>
    <ligandPart>
        <name>Fe</name>
        <dbReference type="ChEBI" id="CHEBI:18248"/>
    </ligandPart>
</feature>
<feature type="binding site" description="covalent" evidence="1">
    <location>
        <position position="314"/>
    </location>
    <ligand>
        <name>heme c</name>
        <dbReference type="ChEBI" id="CHEBI:61717"/>
        <label>5</label>
    </ligand>
</feature>
<feature type="binding site" description="covalent" evidence="1">
    <location>
        <position position="317"/>
    </location>
    <ligand>
        <name>heme c</name>
        <dbReference type="ChEBI" id="CHEBI:61717"/>
        <label>5</label>
    </ligand>
</feature>
<feature type="binding site" description="axial binding residue" evidence="1">
    <location>
        <position position="318"/>
    </location>
    <ligand>
        <name>heme c</name>
        <dbReference type="ChEBI" id="CHEBI:61717"/>
        <label>5</label>
    </ligand>
    <ligandPart>
        <name>Fe</name>
        <dbReference type="ChEBI" id="CHEBI:18248"/>
    </ligandPart>
</feature>
<feature type="binding site" description="axial binding residue" evidence="1">
    <location>
        <position position="393"/>
    </location>
    <ligand>
        <name>heme c</name>
        <dbReference type="ChEBI" id="CHEBI:61717"/>
        <label>4</label>
    </ligand>
    <ligandPart>
        <name>Fe</name>
        <dbReference type="ChEBI" id="CHEBI:18248"/>
    </ligandPart>
</feature>
<organism>
    <name type="scientific">Salmonella paratyphi A (strain AKU_12601)</name>
    <dbReference type="NCBI Taxonomy" id="554290"/>
    <lineage>
        <taxon>Bacteria</taxon>
        <taxon>Pseudomonadati</taxon>
        <taxon>Pseudomonadota</taxon>
        <taxon>Gammaproteobacteria</taxon>
        <taxon>Enterobacterales</taxon>
        <taxon>Enterobacteriaceae</taxon>
        <taxon>Salmonella</taxon>
    </lineage>
</organism>
<accession>B5BJZ8</accession>
<evidence type="ECO:0000255" key="1">
    <source>
        <dbReference type="HAMAP-Rule" id="MF_01182"/>
    </source>
</evidence>
<reference key="1">
    <citation type="journal article" date="2009" name="BMC Genomics">
        <title>Pseudogene accumulation in the evolutionary histories of Salmonella enterica serovars Paratyphi A and Typhi.</title>
        <authorList>
            <person name="Holt K.E."/>
            <person name="Thomson N.R."/>
            <person name="Wain J."/>
            <person name="Langridge G.C."/>
            <person name="Hasan R."/>
            <person name="Bhutta Z.A."/>
            <person name="Quail M.A."/>
            <person name="Norbertczak H."/>
            <person name="Walker D."/>
            <person name="Simmonds M."/>
            <person name="White B."/>
            <person name="Bason N."/>
            <person name="Mungall K."/>
            <person name="Dougan G."/>
            <person name="Parkhill J."/>
        </authorList>
    </citation>
    <scope>NUCLEOTIDE SEQUENCE [LARGE SCALE GENOMIC DNA]</scope>
    <source>
        <strain>AKU_12601</strain>
    </source>
</reference>
<dbReference type="EC" id="1.7.2.2" evidence="1"/>
<dbReference type="EMBL" id="FM200053">
    <property type="protein sequence ID" value="CAR62086.1"/>
    <property type="molecule type" value="Genomic_DNA"/>
</dbReference>
<dbReference type="RefSeq" id="WP_000101781.1">
    <property type="nucleotide sequence ID" value="NC_011147.1"/>
</dbReference>
<dbReference type="SMR" id="B5BJZ8"/>
<dbReference type="KEGG" id="sek:SSPA3801"/>
<dbReference type="HOGENOM" id="CLU_035040_1_0_6"/>
<dbReference type="UniPathway" id="UPA00653"/>
<dbReference type="Proteomes" id="UP000001869">
    <property type="component" value="Chromosome"/>
</dbReference>
<dbReference type="GO" id="GO:0030288">
    <property type="term" value="C:outer membrane-bounded periplasmic space"/>
    <property type="evidence" value="ECO:0007669"/>
    <property type="project" value="TreeGrafter"/>
</dbReference>
<dbReference type="GO" id="GO:0005509">
    <property type="term" value="F:calcium ion binding"/>
    <property type="evidence" value="ECO:0007669"/>
    <property type="project" value="UniProtKB-UniRule"/>
</dbReference>
<dbReference type="GO" id="GO:0020037">
    <property type="term" value="F:heme binding"/>
    <property type="evidence" value="ECO:0007669"/>
    <property type="project" value="InterPro"/>
</dbReference>
<dbReference type="GO" id="GO:0005506">
    <property type="term" value="F:iron ion binding"/>
    <property type="evidence" value="ECO:0007669"/>
    <property type="project" value="UniProtKB-UniRule"/>
</dbReference>
<dbReference type="GO" id="GO:0042279">
    <property type="term" value="F:nitrite reductase (cytochrome, ammonia-forming) activity"/>
    <property type="evidence" value="ECO:0007669"/>
    <property type="project" value="UniProtKB-UniRule"/>
</dbReference>
<dbReference type="GO" id="GO:0019645">
    <property type="term" value="P:anaerobic electron transport chain"/>
    <property type="evidence" value="ECO:0007669"/>
    <property type="project" value="TreeGrafter"/>
</dbReference>
<dbReference type="GO" id="GO:0042128">
    <property type="term" value="P:nitrate assimilation"/>
    <property type="evidence" value="ECO:0007669"/>
    <property type="project" value="UniProtKB-UniRule"/>
</dbReference>
<dbReference type="CDD" id="cd00548">
    <property type="entry name" value="NrfA-like"/>
    <property type="match status" value="1"/>
</dbReference>
<dbReference type="FunFam" id="1.10.1130.10:FF:000002">
    <property type="entry name" value="Cytochrome c-552"/>
    <property type="match status" value="1"/>
</dbReference>
<dbReference type="FunFam" id="1.20.140.10:FF:000014">
    <property type="entry name" value="Cytochrome c-552"/>
    <property type="match status" value="1"/>
</dbReference>
<dbReference type="Gene3D" id="1.20.140.10">
    <property type="entry name" value="Butyryl-CoA Dehydrogenase, subunit A, domain 3"/>
    <property type="match status" value="1"/>
</dbReference>
<dbReference type="Gene3D" id="1.10.1130.10">
    <property type="entry name" value="Flavocytochrome C3, Chain A"/>
    <property type="match status" value="1"/>
</dbReference>
<dbReference type="HAMAP" id="MF_01182">
    <property type="entry name" value="Cytochrom_C552"/>
    <property type="match status" value="1"/>
</dbReference>
<dbReference type="InterPro" id="IPR003321">
    <property type="entry name" value="Cyt_c552"/>
</dbReference>
<dbReference type="InterPro" id="IPR017570">
    <property type="entry name" value="Cyt_c_NO2Rdtase_formate-dep"/>
</dbReference>
<dbReference type="InterPro" id="IPR036280">
    <property type="entry name" value="Multihaem_cyt_sf"/>
</dbReference>
<dbReference type="NCBIfam" id="TIGR03152">
    <property type="entry name" value="cyto_c552_HCOOH"/>
    <property type="match status" value="1"/>
</dbReference>
<dbReference type="NCBIfam" id="NF008339">
    <property type="entry name" value="PRK11125.1"/>
    <property type="match status" value="1"/>
</dbReference>
<dbReference type="PANTHER" id="PTHR30633:SF0">
    <property type="entry name" value="CYTOCHROME C-552"/>
    <property type="match status" value="1"/>
</dbReference>
<dbReference type="PANTHER" id="PTHR30633">
    <property type="entry name" value="CYTOCHROME C-552 RESPIRATORY NITRITE REDUCTASE"/>
    <property type="match status" value="1"/>
</dbReference>
<dbReference type="Pfam" id="PF02335">
    <property type="entry name" value="Cytochrom_C552"/>
    <property type="match status" value="1"/>
</dbReference>
<dbReference type="PIRSF" id="PIRSF000243">
    <property type="entry name" value="Cyt_c552"/>
    <property type="match status" value="1"/>
</dbReference>
<dbReference type="SUPFAM" id="SSF48695">
    <property type="entry name" value="Multiheme cytochromes"/>
    <property type="match status" value="1"/>
</dbReference>
<dbReference type="PROSITE" id="PS51008">
    <property type="entry name" value="MULTIHEME_CYTC"/>
    <property type="match status" value="1"/>
</dbReference>
<proteinExistence type="inferred from homology"/>
<keyword id="KW-0106">Calcium</keyword>
<keyword id="KW-0249">Electron transport</keyword>
<keyword id="KW-0349">Heme</keyword>
<keyword id="KW-0408">Iron</keyword>
<keyword id="KW-0479">Metal-binding</keyword>
<keyword id="KW-0560">Oxidoreductase</keyword>
<keyword id="KW-0574">Periplasm</keyword>
<keyword id="KW-0732">Signal</keyword>
<keyword id="KW-0813">Transport</keyword>
<protein>
    <recommendedName>
        <fullName evidence="1">Cytochrome c-552</fullName>
        <ecNumber evidence="1">1.7.2.2</ecNumber>
    </recommendedName>
    <alternativeName>
        <fullName evidence="1">Ammonia-forming cytochrome c nitrite reductase</fullName>
        <shortName evidence="1">Cytochrome c nitrite reductase</shortName>
    </alternativeName>
</protein>
<gene>
    <name evidence="1" type="primary">nrfA</name>
    <name type="ordered locus">SSPA3801</name>
</gene>